<feature type="chain" id="PRO_0000256204" description="Histone transcription regulator 3 homolog">
    <location>
        <begin position="1"/>
        <end position="1921"/>
    </location>
</feature>
<feature type="region of interest" description="Disordered" evidence="2">
    <location>
        <begin position="350"/>
        <end position="439"/>
    </location>
</feature>
<feature type="region of interest" description="Disordered" evidence="2">
    <location>
        <begin position="1402"/>
        <end position="1466"/>
    </location>
</feature>
<feature type="region of interest" description="Disordered" evidence="2">
    <location>
        <begin position="1738"/>
        <end position="1769"/>
    </location>
</feature>
<feature type="region of interest" description="Disordered" evidence="2">
    <location>
        <begin position="1799"/>
        <end position="1921"/>
    </location>
</feature>
<feature type="compositionally biased region" description="Basic and acidic residues" evidence="2">
    <location>
        <begin position="353"/>
        <end position="376"/>
    </location>
</feature>
<feature type="compositionally biased region" description="Basic and acidic residues" evidence="2">
    <location>
        <begin position="391"/>
        <end position="400"/>
    </location>
</feature>
<feature type="compositionally biased region" description="Polar residues" evidence="2">
    <location>
        <begin position="413"/>
        <end position="422"/>
    </location>
</feature>
<feature type="compositionally biased region" description="Basic and acidic residues" evidence="2">
    <location>
        <begin position="428"/>
        <end position="439"/>
    </location>
</feature>
<feature type="compositionally biased region" description="Acidic residues" evidence="2">
    <location>
        <begin position="1402"/>
        <end position="1425"/>
    </location>
</feature>
<feature type="compositionally biased region" description="Basic and acidic residues" evidence="2">
    <location>
        <begin position="1757"/>
        <end position="1769"/>
    </location>
</feature>
<feature type="compositionally biased region" description="Low complexity" evidence="2">
    <location>
        <begin position="1806"/>
        <end position="1818"/>
    </location>
</feature>
<feature type="compositionally biased region" description="Basic and acidic residues" evidence="2">
    <location>
        <begin position="1819"/>
        <end position="1836"/>
    </location>
</feature>
<feature type="compositionally biased region" description="Basic and acidic residues" evidence="2">
    <location>
        <begin position="1861"/>
        <end position="1890"/>
    </location>
</feature>
<feature type="compositionally biased region" description="Polar residues" evidence="2">
    <location>
        <begin position="1899"/>
        <end position="1910"/>
    </location>
</feature>
<keyword id="KW-0159">Chromosome partition</keyword>
<keyword id="KW-0539">Nucleus</keyword>
<keyword id="KW-1185">Reference proteome</keyword>
<keyword id="KW-0804">Transcription</keyword>
<keyword id="KW-0805">Transcription regulation</keyword>
<protein>
    <recommendedName>
        <fullName>Histone transcription regulator 3 homolog</fullName>
    </recommendedName>
</protein>
<name>HIR3_YARLI</name>
<accession>Q6C9G0</accession>
<organism>
    <name type="scientific">Yarrowia lipolytica (strain CLIB 122 / E 150)</name>
    <name type="common">Yeast</name>
    <name type="synonym">Candida lipolytica</name>
    <dbReference type="NCBI Taxonomy" id="284591"/>
    <lineage>
        <taxon>Eukaryota</taxon>
        <taxon>Fungi</taxon>
        <taxon>Dikarya</taxon>
        <taxon>Ascomycota</taxon>
        <taxon>Saccharomycotina</taxon>
        <taxon>Dipodascomycetes</taxon>
        <taxon>Dipodascales</taxon>
        <taxon>Dipodascales incertae sedis</taxon>
        <taxon>Yarrowia</taxon>
    </lineage>
</organism>
<proteinExistence type="inferred from homology"/>
<gene>
    <name type="primary">HIR3</name>
    <name type="ordered locus">YALI0D11506g</name>
</gene>
<evidence type="ECO:0000250" key="1"/>
<evidence type="ECO:0000256" key="2">
    <source>
        <dbReference type="SAM" id="MobiDB-lite"/>
    </source>
</evidence>
<evidence type="ECO:0000305" key="3"/>
<comment type="function">
    <text evidence="1">Has a role in a nucleosome assembly pathway that is required for the integrity of heterochromatin and proper chromosome segregation.</text>
</comment>
<comment type="subcellular location">
    <subcellularLocation>
        <location evidence="1">Nucleus</location>
    </subcellularLocation>
</comment>
<comment type="similarity">
    <text evidence="3">Belongs to the HIR3 family.</text>
</comment>
<reference key="1">
    <citation type="journal article" date="2004" name="Nature">
        <title>Genome evolution in yeasts.</title>
        <authorList>
            <person name="Dujon B."/>
            <person name="Sherman D."/>
            <person name="Fischer G."/>
            <person name="Durrens P."/>
            <person name="Casaregola S."/>
            <person name="Lafontaine I."/>
            <person name="de Montigny J."/>
            <person name="Marck C."/>
            <person name="Neuveglise C."/>
            <person name="Talla E."/>
            <person name="Goffard N."/>
            <person name="Frangeul L."/>
            <person name="Aigle M."/>
            <person name="Anthouard V."/>
            <person name="Babour A."/>
            <person name="Barbe V."/>
            <person name="Barnay S."/>
            <person name="Blanchin S."/>
            <person name="Beckerich J.-M."/>
            <person name="Beyne E."/>
            <person name="Bleykasten C."/>
            <person name="Boisrame A."/>
            <person name="Boyer J."/>
            <person name="Cattolico L."/>
            <person name="Confanioleri F."/>
            <person name="de Daruvar A."/>
            <person name="Despons L."/>
            <person name="Fabre E."/>
            <person name="Fairhead C."/>
            <person name="Ferry-Dumazet H."/>
            <person name="Groppi A."/>
            <person name="Hantraye F."/>
            <person name="Hennequin C."/>
            <person name="Jauniaux N."/>
            <person name="Joyet P."/>
            <person name="Kachouri R."/>
            <person name="Kerrest A."/>
            <person name="Koszul R."/>
            <person name="Lemaire M."/>
            <person name="Lesur I."/>
            <person name="Ma L."/>
            <person name="Muller H."/>
            <person name="Nicaud J.-M."/>
            <person name="Nikolski M."/>
            <person name="Oztas S."/>
            <person name="Ozier-Kalogeropoulos O."/>
            <person name="Pellenz S."/>
            <person name="Potier S."/>
            <person name="Richard G.-F."/>
            <person name="Straub M.-L."/>
            <person name="Suleau A."/>
            <person name="Swennen D."/>
            <person name="Tekaia F."/>
            <person name="Wesolowski-Louvel M."/>
            <person name="Westhof E."/>
            <person name="Wirth B."/>
            <person name="Zeniou-Meyer M."/>
            <person name="Zivanovic Y."/>
            <person name="Bolotin-Fukuhara M."/>
            <person name="Thierry A."/>
            <person name="Bouchier C."/>
            <person name="Caudron B."/>
            <person name="Scarpelli C."/>
            <person name="Gaillardin C."/>
            <person name="Weissenbach J."/>
            <person name="Wincker P."/>
            <person name="Souciet J.-L."/>
        </authorList>
    </citation>
    <scope>NUCLEOTIDE SEQUENCE [LARGE SCALE GENOMIC DNA]</scope>
    <source>
        <strain>CLIB 122 / E 150</strain>
    </source>
</reference>
<dbReference type="EMBL" id="CR382130">
    <property type="protein sequence ID" value="CAG80890.2"/>
    <property type="molecule type" value="Genomic_DNA"/>
</dbReference>
<dbReference type="RefSeq" id="XP_502702.2">
    <property type="nucleotide sequence ID" value="XM_502702.2"/>
</dbReference>
<dbReference type="SMR" id="Q6C9G0"/>
<dbReference type="FunCoup" id="Q6C9G0">
    <property type="interactions" value="148"/>
</dbReference>
<dbReference type="STRING" id="284591.Q6C9G0"/>
<dbReference type="EnsemblFungi" id="CAG80890">
    <property type="protein sequence ID" value="CAG80890"/>
    <property type="gene ID" value="YALI0_D11506g"/>
</dbReference>
<dbReference type="KEGG" id="yli:2910356"/>
<dbReference type="VEuPathDB" id="FungiDB:YALI0_D11506g"/>
<dbReference type="HOGENOM" id="CLU_001419_0_0_1"/>
<dbReference type="InParanoid" id="Q6C9G0"/>
<dbReference type="OMA" id="WETWYRL"/>
<dbReference type="OrthoDB" id="116352at4891"/>
<dbReference type="Proteomes" id="UP000001300">
    <property type="component" value="Chromosome D"/>
</dbReference>
<dbReference type="GO" id="GO:0000417">
    <property type="term" value="C:HIR complex"/>
    <property type="evidence" value="ECO:0000318"/>
    <property type="project" value="GO_Central"/>
</dbReference>
<dbReference type="GO" id="GO:0005634">
    <property type="term" value="C:nucleus"/>
    <property type="evidence" value="ECO:0000318"/>
    <property type="project" value="GO_Central"/>
</dbReference>
<dbReference type="GO" id="GO:0006325">
    <property type="term" value="P:chromatin organization"/>
    <property type="evidence" value="ECO:0007669"/>
    <property type="project" value="InterPro"/>
</dbReference>
<dbReference type="GO" id="GO:0007059">
    <property type="term" value="P:chromosome segregation"/>
    <property type="evidence" value="ECO:0007669"/>
    <property type="project" value="UniProtKB-KW"/>
</dbReference>
<dbReference type="InterPro" id="IPR033053">
    <property type="entry name" value="Hir3/CABIN1"/>
</dbReference>
<dbReference type="PANTHER" id="PTHR15502">
    <property type="entry name" value="CALCINEURIN-BINDING PROTEIN CABIN 1-RELATED"/>
    <property type="match status" value="1"/>
</dbReference>
<dbReference type="PANTHER" id="PTHR15502:SF7">
    <property type="entry name" value="CALCINEURIN-BINDING PROTEIN CABIN-1"/>
    <property type="match status" value="1"/>
</dbReference>
<sequence length="1921" mass="215884">MSSFIPLNALEDYSLSSAEEHTRELQIEEGLKIFQKALHAQRQGKLDEAFDLYDALFKIDVIHLDIDDNNLSPTVGRLKYLAYKNHGILLLEHLAHNLDDLTTTEIRDQLQDILVQFADALLVDDSDDSFLKLFSDLARIIGLKRLSRFALECIVSSPSRVFTFSESLLNHDFLNPEEVAILQEVVLLAKQLQDYVSMDSPMYDLMASQVADVAPAKKPKYISWIEPTQFKAPPLKDLKETWRGSELVVEIGVPSWRGICKGLHDSLHRLTKRKKVLNGVTIRDPYLQIGVEISSVHGKLVDEEDLEDPEDDVEMMDIIDKPAEETIEVKTEEALDSTVKVEEIPAEINIGEVENKSSTEENKKQESPENGDKKEASGNGNGSAGPPVKDTTVKTEDRDSLTVALAIKRPAEGTTSSSQPPSKRTRGRGADEPAELEKQVDPGFFNNITSFVGSLDLKFPFVDLNQLDNEEQFYQDFKAVISNWGEQGSELFLKLSSAPESNLSVPVTQILDSAAQVDDDYGAPCNVLSISPDKFLEQMSESCSLSDFRFKIIEALLGNSSLVNEIWPSELIASVQIILNHLEPQILRDVRQMFFDGQTHSDSLIKQQLYVAEARYELVANEIIADKQRITENTSKLTKSALRDREWHKKTLHQRLLAWESCVITLLSMCKTRQLSVTELELRHTWVRLSLSQCDEAEISRMRQNYEEFQVQLLDEAPDLMVRFVNFPHIQTLSLDSVNGQISKLKVASTFAKIFSPDADEDIGTRIAMLESILKGSSDTSGDRESLSAREFLQHASIDFKHKLWYLLLDAYNESGEKRISVDGYIEMLTSLSYELETAGYRNMNPNQRHTILLRTLSTMNDTVGNLAKICRDTPALLESVSREKIHELAQLCLSFLRLLQVFNQFYDRRNPEEPTPFLWDKASEKFQTMMVKLWTFFYLLFRQLTNGLDENLPQTTISTLNDILSIVHEDLGHRKCCSFANGIFVDLTLDEIVRMKWNESEADLLQNIRCRFGIQLANEHYHPTDHGATPRALKRSDGLAFQDFIMNMVYRKPSSVHNIRADLRAVMDQLYEAIGDPDKNIASTSHNMTVLGRFTVAPVTWNYIENSLRGESFLPFMTSTDPVLSASTGGFYCVQGMLALAKFRQGKKAAAPGRTEDLQAAVKFFTNDILCCPTRYESWFGIANAYEMLTEDDLMWSAEKLDVPNSIVNINQRKALLCGLNSVNLMLQQRDEKPANPQLRTFFNAVMKESQWLFLSKLFYSATANPLHGASFRQADNKIFCGMKGLYMRQNLSLPRRKQCYQVVRACLTISINSKDQPPDWYSYYLRSKVYSKLKKTTQAILGDIQKSIAVAPDKINGDILLEPHYKLVAYLYKAVKRGKLTAAEAYKELKKTPHFVEYLGEDADMESGDDSDSDSEVGSDSETESTKEGPIASATEPAADTAPPVVPSEGTSGSPISIDDATPVPGPVTAVTAIAAPPTVAAKPEEKKKPLTRMEIKFYKSCIETLRRMKVLDKRKWHHRPPFLIARIHKEVFEDYRSAKEEMVPFFNLKNQSKAPVHIWKPDFERAGKHFQYVFDYLMFFIVLLDKTDDTDAITTIGKKLRRFNNGMVNHFEVWEFTCLTSNVLMKRVTRIPEKLPDAIIPSLQFDNFDRIAQGLQDKITKSKEPASYLLSLLYYASEFRRLNNGFGSTGVVDDTVVCLYLKMLIEYAGTSLLADNKSRSSTPVVLDGAKFEFQPGSAQPPALPAPATTATTAGKKEDGKKEKTRVTRKDILLRATNLIKACSNKVGENIKLVTTKGPPAVASSNGSSSNSGTRSNSEEKEKEPTEEPEKSTQDSDVEMADANQGNTETTVEPEAEGEADKSAEEDKSDKSAEEEKTDKFAEEEKSASAEPAGKNTPKSKSTGSNGVITIDEEYSAPE</sequence>